<proteinExistence type="inferred from homology"/>
<comment type="function">
    <text evidence="1">Binds to DNA and alters its conformation. May be involved in regulation of gene expression, nucleoid organization and DNA protection.</text>
</comment>
<comment type="subunit">
    <text evidence="1">Homodimer.</text>
</comment>
<comment type="subcellular location">
    <subcellularLocation>
        <location evidence="1">Cytoplasm</location>
        <location evidence="1">Nucleoid</location>
    </subcellularLocation>
</comment>
<comment type="similarity">
    <text evidence="1">Belongs to the YbaB/EbfC family.</text>
</comment>
<name>Y1483_PEDPA</name>
<keyword id="KW-0963">Cytoplasm</keyword>
<keyword id="KW-0238">DNA-binding</keyword>
<evidence type="ECO:0000255" key="1">
    <source>
        <dbReference type="HAMAP-Rule" id="MF_00274"/>
    </source>
</evidence>
<evidence type="ECO:0000256" key="2">
    <source>
        <dbReference type="SAM" id="MobiDB-lite"/>
    </source>
</evidence>
<gene>
    <name type="ordered locus">PEPE_1483</name>
</gene>
<reference key="1">
    <citation type="journal article" date="2006" name="Proc. Natl. Acad. Sci. U.S.A.">
        <title>Comparative genomics of the lactic acid bacteria.</title>
        <authorList>
            <person name="Makarova K.S."/>
            <person name="Slesarev A."/>
            <person name="Wolf Y.I."/>
            <person name="Sorokin A."/>
            <person name="Mirkin B."/>
            <person name="Koonin E.V."/>
            <person name="Pavlov A."/>
            <person name="Pavlova N."/>
            <person name="Karamychev V."/>
            <person name="Polouchine N."/>
            <person name="Shakhova V."/>
            <person name="Grigoriev I."/>
            <person name="Lou Y."/>
            <person name="Rohksar D."/>
            <person name="Lucas S."/>
            <person name="Huang K."/>
            <person name="Goodstein D.M."/>
            <person name="Hawkins T."/>
            <person name="Plengvidhya V."/>
            <person name="Welker D."/>
            <person name="Hughes J."/>
            <person name="Goh Y."/>
            <person name="Benson A."/>
            <person name="Baldwin K."/>
            <person name="Lee J.-H."/>
            <person name="Diaz-Muniz I."/>
            <person name="Dosti B."/>
            <person name="Smeianov V."/>
            <person name="Wechter W."/>
            <person name="Barabote R."/>
            <person name="Lorca G."/>
            <person name="Altermann E."/>
            <person name="Barrangou R."/>
            <person name="Ganesan B."/>
            <person name="Xie Y."/>
            <person name="Rawsthorne H."/>
            <person name="Tamir D."/>
            <person name="Parker C."/>
            <person name="Breidt F."/>
            <person name="Broadbent J.R."/>
            <person name="Hutkins R."/>
            <person name="O'Sullivan D."/>
            <person name="Steele J."/>
            <person name="Unlu G."/>
            <person name="Saier M.H. Jr."/>
            <person name="Klaenhammer T."/>
            <person name="Richardson P."/>
            <person name="Kozyavkin S."/>
            <person name="Weimer B.C."/>
            <person name="Mills D.A."/>
        </authorList>
    </citation>
    <scope>NUCLEOTIDE SEQUENCE [LARGE SCALE GENOMIC DNA]</scope>
    <source>
        <strain>ATCC 25745 / CCUG 21536 / LMG 10740 / 183-1w</strain>
    </source>
</reference>
<sequence>MRGGMGNMQSMMRQMQKMQKKVTEEQEKLNQTEFTGVAPDDMVKVVFTGDHRMKDIVINPEAIDEDDPDMLQDLIVAAVNDAMNRVDSETNKTMGKYTKGIPGM</sequence>
<organism>
    <name type="scientific">Pediococcus pentosaceus (strain ATCC 25745 / CCUG 21536 / LMG 10740 / 183-1w)</name>
    <dbReference type="NCBI Taxonomy" id="278197"/>
    <lineage>
        <taxon>Bacteria</taxon>
        <taxon>Bacillati</taxon>
        <taxon>Bacillota</taxon>
        <taxon>Bacilli</taxon>
        <taxon>Lactobacillales</taxon>
        <taxon>Lactobacillaceae</taxon>
        <taxon>Pediococcus</taxon>
    </lineage>
</organism>
<feature type="chain" id="PRO_1000003790" description="Nucleoid-associated protein PEPE_1483">
    <location>
        <begin position="1"/>
        <end position="104"/>
    </location>
</feature>
<feature type="region of interest" description="Disordered" evidence="2">
    <location>
        <begin position="1"/>
        <end position="35"/>
    </location>
</feature>
<feature type="compositionally biased region" description="Low complexity" evidence="2">
    <location>
        <begin position="8"/>
        <end position="17"/>
    </location>
</feature>
<feature type="compositionally biased region" description="Basic and acidic residues" evidence="2">
    <location>
        <begin position="21"/>
        <end position="30"/>
    </location>
</feature>
<dbReference type="EMBL" id="CP000422">
    <property type="protein sequence ID" value="ABJ68514.1"/>
    <property type="molecule type" value="Genomic_DNA"/>
</dbReference>
<dbReference type="RefSeq" id="WP_002833269.1">
    <property type="nucleotide sequence ID" value="NC_008525.1"/>
</dbReference>
<dbReference type="SMR" id="Q03E58"/>
<dbReference type="STRING" id="278197.PEPE_1483"/>
<dbReference type="GeneID" id="33062638"/>
<dbReference type="KEGG" id="ppe:PEPE_1483"/>
<dbReference type="eggNOG" id="COG0718">
    <property type="taxonomic scope" value="Bacteria"/>
</dbReference>
<dbReference type="HOGENOM" id="CLU_140930_1_1_9"/>
<dbReference type="OrthoDB" id="9795263at2"/>
<dbReference type="Proteomes" id="UP000000773">
    <property type="component" value="Chromosome"/>
</dbReference>
<dbReference type="GO" id="GO:0043590">
    <property type="term" value="C:bacterial nucleoid"/>
    <property type="evidence" value="ECO:0007669"/>
    <property type="project" value="UniProtKB-UniRule"/>
</dbReference>
<dbReference type="GO" id="GO:0005829">
    <property type="term" value="C:cytosol"/>
    <property type="evidence" value="ECO:0007669"/>
    <property type="project" value="TreeGrafter"/>
</dbReference>
<dbReference type="GO" id="GO:0003677">
    <property type="term" value="F:DNA binding"/>
    <property type="evidence" value="ECO:0007669"/>
    <property type="project" value="UniProtKB-UniRule"/>
</dbReference>
<dbReference type="Gene3D" id="3.30.1310.10">
    <property type="entry name" value="Nucleoid-associated protein YbaB-like domain"/>
    <property type="match status" value="1"/>
</dbReference>
<dbReference type="HAMAP" id="MF_00274">
    <property type="entry name" value="DNA_YbaB_EbfC"/>
    <property type="match status" value="1"/>
</dbReference>
<dbReference type="InterPro" id="IPR036894">
    <property type="entry name" value="YbaB-like_sf"/>
</dbReference>
<dbReference type="InterPro" id="IPR004401">
    <property type="entry name" value="YbaB/EbfC"/>
</dbReference>
<dbReference type="NCBIfam" id="TIGR00103">
    <property type="entry name" value="DNA_YbaB_EbfC"/>
    <property type="match status" value="1"/>
</dbReference>
<dbReference type="PANTHER" id="PTHR33449">
    <property type="entry name" value="NUCLEOID-ASSOCIATED PROTEIN YBAB"/>
    <property type="match status" value="1"/>
</dbReference>
<dbReference type="PANTHER" id="PTHR33449:SF1">
    <property type="entry name" value="NUCLEOID-ASSOCIATED PROTEIN YBAB"/>
    <property type="match status" value="1"/>
</dbReference>
<dbReference type="Pfam" id="PF02575">
    <property type="entry name" value="YbaB_DNA_bd"/>
    <property type="match status" value="1"/>
</dbReference>
<dbReference type="PIRSF" id="PIRSF004555">
    <property type="entry name" value="UCP004555"/>
    <property type="match status" value="1"/>
</dbReference>
<dbReference type="SUPFAM" id="SSF82607">
    <property type="entry name" value="YbaB-like"/>
    <property type="match status" value="1"/>
</dbReference>
<protein>
    <recommendedName>
        <fullName evidence="1">Nucleoid-associated protein PEPE_1483</fullName>
    </recommendedName>
</protein>
<accession>Q03E58</accession>